<keyword id="KW-1185">Reference proteome</keyword>
<keyword id="KW-0687">Ribonucleoprotein</keyword>
<keyword id="KW-0689">Ribosomal protein</keyword>
<keyword id="KW-0694">RNA-binding</keyword>
<keyword id="KW-0699">rRNA-binding</keyword>
<dbReference type="EMBL" id="CP001275">
    <property type="protein sequence ID" value="ACM04971.1"/>
    <property type="molecule type" value="Genomic_DNA"/>
</dbReference>
<dbReference type="RefSeq" id="WP_015921934.1">
    <property type="nucleotide sequence ID" value="NC_011959.1"/>
</dbReference>
<dbReference type="SMR" id="B9KZX3"/>
<dbReference type="STRING" id="309801.trd_0970"/>
<dbReference type="KEGG" id="tro:trd_0970"/>
<dbReference type="eggNOG" id="COG0097">
    <property type="taxonomic scope" value="Bacteria"/>
</dbReference>
<dbReference type="HOGENOM" id="CLU_065464_1_2_0"/>
<dbReference type="OrthoDB" id="9805007at2"/>
<dbReference type="Proteomes" id="UP000000447">
    <property type="component" value="Chromosome"/>
</dbReference>
<dbReference type="GO" id="GO:0022625">
    <property type="term" value="C:cytosolic large ribosomal subunit"/>
    <property type="evidence" value="ECO:0007669"/>
    <property type="project" value="TreeGrafter"/>
</dbReference>
<dbReference type="GO" id="GO:0019843">
    <property type="term" value="F:rRNA binding"/>
    <property type="evidence" value="ECO:0007669"/>
    <property type="project" value="UniProtKB-UniRule"/>
</dbReference>
<dbReference type="GO" id="GO:0003735">
    <property type="term" value="F:structural constituent of ribosome"/>
    <property type="evidence" value="ECO:0007669"/>
    <property type="project" value="InterPro"/>
</dbReference>
<dbReference type="GO" id="GO:0002181">
    <property type="term" value="P:cytoplasmic translation"/>
    <property type="evidence" value="ECO:0007669"/>
    <property type="project" value="TreeGrafter"/>
</dbReference>
<dbReference type="FunFam" id="3.90.930.12:FF:000001">
    <property type="entry name" value="50S ribosomal protein L6"/>
    <property type="match status" value="1"/>
</dbReference>
<dbReference type="FunFam" id="3.90.930.12:FF:000002">
    <property type="entry name" value="50S ribosomal protein L6"/>
    <property type="match status" value="1"/>
</dbReference>
<dbReference type="Gene3D" id="3.90.930.12">
    <property type="entry name" value="Ribosomal protein L6, alpha-beta domain"/>
    <property type="match status" value="2"/>
</dbReference>
<dbReference type="HAMAP" id="MF_01365_B">
    <property type="entry name" value="Ribosomal_uL6_B"/>
    <property type="match status" value="1"/>
</dbReference>
<dbReference type="InterPro" id="IPR000702">
    <property type="entry name" value="Ribosomal_uL6-like"/>
</dbReference>
<dbReference type="InterPro" id="IPR036789">
    <property type="entry name" value="Ribosomal_uL6-like_a/b-dom_sf"/>
</dbReference>
<dbReference type="InterPro" id="IPR020040">
    <property type="entry name" value="Ribosomal_uL6_a/b-dom"/>
</dbReference>
<dbReference type="InterPro" id="IPR019906">
    <property type="entry name" value="Ribosomal_uL6_bac-type"/>
</dbReference>
<dbReference type="NCBIfam" id="TIGR03654">
    <property type="entry name" value="L6_bact"/>
    <property type="match status" value="1"/>
</dbReference>
<dbReference type="PANTHER" id="PTHR11655">
    <property type="entry name" value="60S/50S RIBOSOMAL PROTEIN L6/L9"/>
    <property type="match status" value="1"/>
</dbReference>
<dbReference type="PANTHER" id="PTHR11655:SF14">
    <property type="entry name" value="LARGE RIBOSOMAL SUBUNIT PROTEIN UL6M"/>
    <property type="match status" value="1"/>
</dbReference>
<dbReference type="Pfam" id="PF00347">
    <property type="entry name" value="Ribosomal_L6"/>
    <property type="match status" value="2"/>
</dbReference>
<dbReference type="PIRSF" id="PIRSF002162">
    <property type="entry name" value="Ribosomal_L6"/>
    <property type="match status" value="1"/>
</dbReference>
<dbReference type="PRINTS" id="PR00059">
    <property type="entry name" value="RIBOSOMALL6"/>
</dbReference>
<dbReference type="SUPFAM" id="SSF56053">
    <property type="entry name" value="Ribosomal protein L6"/>
    <property type="match status" value="2"/>
</dbReference>
<comment type="function">
    <text evidence="1">This protein binds to the 23S rRNA, and is important in its secondary structure. It is located near the subunit interface in the base of the L7/L12 stalk, and near the tRNA binding site of the peptidyltransferase center.</text>
</comment>
<comment type="subunit">
    <text evidence="1">Part of the 50S ribosomal subunit.</text>
</comment>
<comment type="similarity">
    <text evidence="1">Belongs to the universal ribosomal protein uL6 family.</text>
</comment>
<proteinExistence type="inferred from homology"/>
<accession>B9KZX3</accession>
<evidence type="ECO:0000255" key="1">
    <source>
        <dbReference type="HAMAP-Rule" id="MF_01365"/>
    </source>
</evidence>
<evidence type="ECO:0000305" key="2"/>
<organism>
    <name type="scientific">Thermomicrobium roseum (strain ATCC 27502 / DSM 5159 / P-2)</name>
    <dbReference type="NCBI Taxonomy" id="309801"/>
    <lineage>
        <taxon>Bacteria</taxon>
        <taxon>Pseudomonadati</taxon>
        <taxon>Thermomicrobiota</taxon>
        <taxon>Thermomicrobia</taxon>
        <taxon>Thermomicrobiales</taxon>
        <taxon>Thermomicrobiaceae</taxon>
        <taxon>Thermomicrobium</taxon>
    </lineage>
</organism>
<gene>
    <name evidence="1" type="primary">rplF</name>
    <name type="ordered locus">trd_0970</name>
</gene>
<name>RL6_THERP</name>
<protein>
    <recommendedName>
        <fullName evidence="1">Large ribosomal subunit protein uL6</fullName>
    </recommendedName>
    <alternativeName>
        <fullName evidence="2">50S ribosomal protein L6</fullName>
    </alternativeName>
</protein>
<feature type="chain" id="PRO_1000166838" description="Large ribosomal subunit protein uL6">
    <location>
        <begin position="1"/>
        <end position="184"/>
    </location>
</feature>
<reference key="1">
    <citation type="journal article" date="2009" name="PLoS ONE">
        <title>Complete genome sequence of the aerobic CO-oxidizing thermophile Thermomicrobium roseum.</title>
        <authorList>
            <person name="Wu D."/>
            <person name="Raymond J."/>
            <person name="Wu M."/>
            <person name="Chatterji S."/>
            <person name="Ren Q."/>
            <person name="Graham J.E."/>
            <person name="Bryant D.A."/>
            <person name="Robb F."/>
            <person name="Colman A."/>
            <person name="Tallon L.J."/>
            <person name="Badger J.H."/>
            <person name="Madupu R."/>
            <person name="Ward N.L."/>
            <person name="Eisen J.A."/>
        </authorList>
    </citation>
    <scope>NUCLEOTIDE SEQUENCE [LARGE SCALE GENOMIC DNA]</scope>
    <source>
        <strain>ATCC 27502 / DSM 5159 / P-2</strain>
    </source>
</reference>
<sequence>MSRIGKRPIPIPAGVQVELTPDNVVRVTGPKGQLELRLHPKMIVQRENGVVQVQRPSDERFFKQLHGLYRTLIANMVQGVTEGFRKDLEIHGVGYRAALEGKTLVLTVGYSHPVRIDPPPGISFIVESPTRIGVVGIDKQLVGEVAAQIRRVRPPEPYQGKGIRYAGEVIRRKAGKTGKTKGKK</sequence>